<accession>A8EXY4</accession>
<gene>
    <name type="ordered locus">A1E_01360</name>
</gene>
<evidence type="ECO:0000255" key="1">
    <source>
        <dbReference type="HAMAP-Rule" id="MF_00434"/>
    </source>
</evidence>
<dbReference type="EC" id="4.2.1.96" evidence="1"/>
<dbReference type="EMBL" id="CP000409">
    <property type="protein sequence ID" value="ABV73217.1"/>
    <property type="molecule type" value="Genomic_DNA"/>
</dbReference>
<dbReference type="RefSeq" id="WP_012148416.1">
    <property type="nucleotide sequence ID" value="NC_009879.1"/>
</dbReference>
<dbReference type="SMR" id="A8EXY4"/>
<dbReference type="KEGG" id="rcm:A1E_01360"/>
<dbReference type="eggNOG" id="COG2154">
    <property type="taxonomic scope" value="Bacteria"/>
</dbReference>
<dbReference type="HOGENOM" id="CLU_081974_2_2_5"/>
<dbReference type="Proteomes" id="UP000007056">
    <property type="component" value="Chromosome"/>
</dbReference>
<dbReference type="GO" id="GO:0008124">
    <property type="term" value="F:4-alpha-hydroxytetrahydrobiopterin dehydratase activity"/>
    <property type="evidence" value="ECO:0007669"/>
    <property type="project" value="UniProtKB-UniRule"/>
</dbReference>
<dbReference type="GO" id="GO:0006729">
    <property type="term" value="P:tetrahydrobiopterin biosynthetic process"/>
    <property type="evidence" value="ECO:0007669"/>
    <property type="project" value="InterPro"/>
</dbReference>
<dbReference type="CDD" id="cd00913">
    <property type="entry name" value="PCD_DCoH_subfamily_a"/>
    <property type="match status" value="1"/>
</dbReference>
<dbReference type="Gene3D" id="3.30.1360.20">
    <property type="entry name" value="Transcriptional coactivator/pterin dehydratase"/>
    <property type="match status" value="1"/>
</dbReference>
<dbReference type="HAMAP" id="MF_00434">
    <property type="entry name" value="Pterin_4_alpha"/>
    <property type="match status" value="1"/>
</dbReference>
<dbReference type="InterPro" id="IPR036428">
    <property type="entry name" value="PCD_sf"/>
</dbReference>
<dbReference type="InterPro" id="IPR001533">
    <property type="entry name" value="Pterin_deHydtase"/>
</dbReference>
<dbReference type="PANTHER" id="PTHR12599">
    <property type="entry name" value="PTERIN-4-ALPHA-CARBINOLAMINE DEHYDRATASE"/>
    <property type="match status" value="1"/>
</dbReference>
<dbReference type="PANTHER" id="PTHR12599:SF0">
    <property type="entry name" value="PTERIN-4-ALPHA-CARBINOLAMINE DEHYDRATASE"/>
    <property type="match status" value="1"/>
</dbReference>
<dbReference type="Pfam" id="PF01329">
    <property type="entry name" value="Pterin_4a"/>
    <property type="match status" value="1"/>
</dbReference>
<dbReference type="SUPFAM" id="SSF55248">
    <property type="entry name" value="PCD-like"/>
    <property type="match status" value="1"/>
</dbReference>
<sequence length="109" mass="12427">MTVLSEKKCIPCEGGVPPLEKKEIDKLLAELQNEWQVNELGHLYKKYKFPNFVKALDFANKIAAIAEQEVHHPNLNISWGVCNVEIWTHKINGLTENDFILAAKIESKI</sequence>
<feature type="chain" id="PRO_1000050448" description="Putative pterin-4-alpha-carbinolamine dehydratase">
    <location>
        <begin position="1"/>
        <end position="109"/>
    </location>
</feature>
<keyword id="KW-0456">Lyase</keyword>
<comment type="catalytic activity">
    <reaction evidence="1">
        <text>(4aS,6R)-4a-hydroxy-L-erythro-5,6,7,8-tetrahydrobiopterin = (6R)-L-erythro-6,7-dihydrobiopterin + H2O</text>
        <dbReference type="Rhea" id="RHEA:11920"/>
        <dbReference type="ChEBI" id="CHEBI:15377"/>
        <dbReference type="ChEBI" id="CHEBI:15642"/>
        <dbReference type="ChEBI" id="CHEBI:43120"/>
        <dbReference type="EC" id="4.2.1.96"/>
    </reaction>
</comment>
<comment type="similarity">
    <text evidence="1">Belongs to the pterin-4-alpha-carbinolamine dehydratase family.</text>
</comment>
<organism>
    <name type="scientific">Rickettsia canadensis (strain McKiel)</name>
    <dbReference type="NCBI Taxonomy" id="293613"/>
    <lineage>
        <taxon>Bacteria</taxon>
        <taxon>Pseudomonadati</taxon>
        <taxon>Pseudomonadota</taxon>
        <taxon>Alphaproteobacteria</taxon>
        <taxon>Rickettsiales</taxon>
        <taxon>Rickettsiaceae</taxon>
        <taxon>Rickettsieae</taxon>
        <taxon>Rickettsia</taxon>
        <taxon>belli group</taxon>
    </lineage>
</organism>
<reference key="1">
    <citation type="submission" date="2007-09" db="EMBL/GenBank/DDBJ databases">
        <title>Complete genome sequence of Rickettsia canadensis.</title>
        <authorList>
            <person name="Madan A."/>
            <person name="Fahey J."/>
            <person name="Helton E."/>
            <person name="Ketteman M."/>
            <person name="Madan A."/>
            <person name="Rodrigues S."/>
            <person name="Sanchez A."/>
            <person name="Whiting M."/>
            <person name="Dasch G."/>
            <person name="Eremeeva M."/>
        </authorList>
    </citation>
    <scope>NUCLEOTIDE SEQUENCE [LARGE SCALE GENOMIC DNA]</scope>
    <source>
        <strain>McKiel</strain>
    </source>
</reference>
<protein>
    <recommendedName>
        <fullName evidence="1">Putative pterin-4-alpha-carbinolamine dehydratase</fullName>
        <shortName evidence="1">PHS</shortName>
        <ecNumber evidence="1">4.2.1.96</ecNumber>
    </recommendedName>
    <alternativeName>
        <fullName evidence="1">4-alpha-hydroxy-tetrahydropterin dehydratase</fullName>
    </alternativeName>
    <alternativeName>
        <fullName evidence="1">Pterin carbinolamine dehydratase</fullName>
        <shortName evidence="1">PCD</shortName>
    </alternativeName>
</protein>
<proteinExistence type="inferred from homology"/>
<name>PHS_RICCK</name>